<name>YRZH_BACSU</name>
<proteinExistence type="predicted"/>
<accession>O32059</accession>
<feature type="chain" id="PRO_0000049885" description="Uncharacterized protein YrzH">
    <location>
        <begin position="1"/>
        <end position="43"/>
    </location>
</feature>
<reference key="1">
    <citation type="journal article" date="1997" name="Nature">
        <title>The complete genome sequence of the Gram-positive bacterium Bacillus subtilis.</title>
        <authorList>
            <person name="Kunst F."/>
            <person name="Ogasawara N."/>
            <person name="Moszer I."/>
            <person name="Albertini A.M."/>
            <person name="Alloni G."/>
            <person name="Azevedo V."/>
            <person name="Bertero M.G."/>
            <person name="Bessieres P."/>
            <person name="Bolotin A."/>
            <person name="Borchert S."/>
            <person name="Borriss R."/>
            <person name="Boursier L."/>
            <person name="Brans A."/>
            <person name="Braun M."/>
            <person name="Brignell S.C."/>
            <person name="Bron S."/>
            <person name="Brouillet S."/>
            <person name="Bruschi C.V."/>
            <person name="Caldwell B."/>
            <person name="Capuano V."/>
            <person name="Carter N.M."/>
            <person name="Choi S.-K."/>
            <person name="Codani J.-J."/>
            <person name="Connerton I.F."/>
            <person name="Cummings N.J."/>
            <person name="Daniel R.A."/>
            <person name="Denizot F."/>
            <person name="Devine K.M."/>
            <person name="Duesterhoeft A."/>
            <person name="Ehrlich S.D."/>
            <person name="Emmerson P.T."/>
            <person name="Entian K.-D."/>
            <person name="Errington J."/>
            <person name="Fabret C."/>
            <person name="Ferrari E."/>
            <person name="Foulger D."/>
            <person name="Fritz C."/>
            <person name="Fujita M."/>
            <person name="Fujita Y."/>
            <person name="Fuma S."/>
            <person name="Galizzi A."/>
            <person name="Galleron N."/>
            <person name="Ghim S.-Y."/>
            <person name="Glaser P."/>
            <person name="Goffeau A."/>
            <person name="Golightly E.J."/>
            <person name="Grandi G."/>
            <person name="Guiseppi G."/>
            <person name="Guy B.J."/>
            <person name="Haga K."/>
            <person name="Haiech J."/>
            <person name="Harwood C.R."/>
            <person name="Henaut A."/>
            <person name="Hilbert H."/>
            <person name="Holsappel S."/>
            <person name="Hosono S."/>
            <person name="Hullo M.-F."/>
            <person name="Itaya M."/>
            <person name="Jones L.-M."/>
            <person name="Joris B."/>
            <person name="Karamata D."/>
            <person name="Kasahara Y."/>
            <person name="Klaerr-Blanchard M."/>
            <person name="Klein C."/>
            <person name="Kobayashi Y."/>
            <person name="Koetter P."/>
            <person name="Koningstein G."/>
            <person name="Krogh S."/>
            <person name="Kumano M."/>
            <person name="Kurita K."/>
            <person name="Lapidus A."/>
            <person name="Lardinois S."/>
            <person name="Lauber J."/>
            <person name="Lazarevic V."/>
            <person name="Lee S.-M."/>
            <person name="Levine A."/>
            <person name="Liu H."/>
            <person name="Masuda S."/>
            <person name="Mauel C."/>
            <person name="Medigue C."/>
            <person name="Medina N."/>
            <person name="Mellado R.P."/>
            <person name="Mizuno M."/>
            <person name="Moestl D."/>
            <person name="Nakai S."/>
            <person name="Noback M."/>
            <person name="Noone D."/>
            <person name="O'Reilly M."/>
            <person name="Ogawa K."/>
            <person name="Ogiwara A."/>
            <person name="Oudega B."/>
            <person name="Park S.-H."/>
            <person name="Parro V."/>
            <person name="Pohl T.M."/>
            <person name="Portetelle D."/>
            <person name="Porwollik S."/>
            <person name="Prescott A.M."/>
            <person name="Presecan E."/>
            <person name="Pujic P."/>
            <person name="Purnelle B."/>
            <person name="Rapoport G."/>
            <person name="Rey M."/>
            <person name="Reynolds S."/>
            <person name="Rieger M."/>
            <person name="Rivolta C."/>
            <person name="Rocha E."/>
            <person name="Roche B."/>
            <person name="Rose M."/>
            <person name="Sadaie Y."/>
            <person name="Sato T."/>
            <person name="Scanlan E."/>
            <person name="Schleich S."/>
            <person name="Schroeter R."/>
            <person name="Scoffone F."/>
            <person name="Sekiguchi J."/>
            <person name="Sekowska A."/>
            <person name="Seror S.J."/>
            <person name="Serror P."/>
            <person name="Shin B.-S."/>
            <person name="Soldo B."/>
            <person name="Sorokin A."/>
            <person name="Tacconi E."/>
            <person name="Takagi T."/>
            <person name="Takahashi H."/>
            <person name="Takemaru K."/>
            <person name="Takeuchi M."/>
            <person name="Tamakoshi A."/>
            <person name="Tanaka T."/>
            <person name="Terpstra P."/>
            <person name="Tognoni A."/>
            <person name="Tosato V."/>
            <person name="Uchiyama S."/>
            <person name="Vandenbol M."/>
            <person name="Vannier F."/>
            <person name="Vassarotti A."/>
            <person name="Viari A."/>
            <person name="Wambutt R."/>
            <person name="Wedler E."/>
            <person name="Wedler H."/>
            <person name="Weitzenegger T."/>
            <person name="Winters P."/>
            <person name="Wipat A."/>
            <person name="Yamamoto H."/>
            <person name="Yamane K."/>
            <person name="Yasumoto K."/>
            <person name="Yata K."/>
            <person name="Yoshida K."/>
            <person name="Yoshikawa H.-F."/>
            <person name="Zumstein E."/>
            <person name="Yoshikawa H."/>
            <person name="Danchin A."/>
        </authorList>
    </citation>
    <scope>NUCLEOTIDE SEQUENCE [LARGE SCALE GENOMIC DNA]</scope>
    <source>
        <strain>168</strain>
    </source>
</reference>
<sequence length="43" mass="5248">MTWINHNTVKIGNQTLHLDTDETYDWRKDDHWIREEPPQASVR</sequence>
<keyword id="KW-1185">Reference proteome</keyword>
<dbReference type="EMBL" id="AL009126">
    <property type="protein sequence ID" value="CAB14740.1"/>
    <property type="molecule type" value="Genomic_DNA"/>
</dbReference>
<dbReference type="PIR" id="G69982">
    <property type="entry name" value="G69982"/>
</dbReference>
<dbReference type="RefSeq" id="NP_390658.1">
    <property type="nucleotide sequence ID" value="NC_000964.3"/>
</dbReference>
<dbReference type="FunCoup" id="O32059">
    <property type="interactions" value="17"/>
</dbReference>
<dbReference type="STRING" id="224308.BSU27800"/>
<dbReference type="PaxDb" id="224308-BSU27800"/>
<dbReference type="EnsemblBacteria" id="CAB14740">
    <property type="protein sequence ID" value="CAB14740"/>
    <property type="gene ID" value="BSU_27800"/>
</dbReference>
<dbReference type="GeneID" id="936007"/>
<dbReference type="KEGG" id="bsu:BSU27800"/>
<dbReference type="PATRIC" id="fig|224308.43.peg.2903"/>
<dbReference type="InParanoid" id="O32059"/>
<dbReference type="OrthoDB" id="2357451at2"/>
<dbReference type="BioCyc" id="BSUB:BSU27800-MONOMER"/>
<dbReference type="Proteomes" id="UP000001570">
    <property type="component" value="Chromosome"/>
</dbReference>
<gene>
    <name type="primary">yrzH</name>
    <name type="ordered locus">BSU27800</name>
</gene>
<organism>
    <name type="scientific">Bacillus subtilis (strain 168)</name>
    <dbReference type="NCBI Taxonomy" id="224308"/>
    <lineage>
        <taxon>Bacteria</taxon>
        <taxon>Bacillati</taxon>
        <taxon>Bacillota</taxon>
        <taxon>Bacilli</taxon>
        <taxon>Bacillales</taxon>
        <taxon>Bacillaceae</taxon>
        <taxon>Bacillus</taxon>
    </lineage>
</organism>
<protein>
    <recommendedName>
        <fullName>Uncharacterized protein YrzH</fullName>
    </recommendedName>
</protein>